<comment type="function">
    <text evidence="1">Specifically methylates the ribose of guanosine 2251 in 23S rRNA.</text>
</comment>
<comment type="catalytic activity">
    <reaction evidence="1">
        <text>guanosine(2251) in 23S rRNA + S-adenosyl-L-methionine = 2'-O-methylguanosine(2251) in 23S rRNA + S-adenosyl-L-homocysteine + H(+)</text>
        <dbReference type="Rhea" id="RHEA:24140"/>
        <dbReference type="Rhea" id="RHEA-COMP:10239"/>
        <dbReference type="Rhea" id="RHEA-COMP:10241"/>
        <dbReference type="ChEBI" id="CHEBI:15378"/>
        <dbReference type="ChEBI" id="CHEBI:57856"/>
        <dbReference type="ChEBI" id="CHEBI:59789"/>
        <dbReference type="ChEBI" id="CHEBI:74269"/>
        <dbReference type="ChEBI" id="CHEBI:74445"/>
        <dbReference type="EC" id="2.1.1.185"/>
    </reaction>
</comment>
<comment type="subcellular location">
    <subcellularLocation>
        <location evidence="1">Cytoplasm</location>
    </subcellularLocation>
</comment>
<comment type="similarity">
    <text evidence="1">Belongs to the class IV-like SAM-binding methyltransferase superfamily. RNA methyltransferase TrmH family. RlmB subfamily.</text>
</comment>
<accession>Q8PAG5</accession>
<reference key="1">
    <citation type="journal article" date="2002" name="Nature">
        <title>Comparison of the genomes of two Xanthomonas pathogens with differing host specificities.</title>
        <authorList>
            <person name="da Silva A.C.R."/>
            <person name="Ferro J.A."/>
            <person name="Reinach F.C."/>
            <person name="Farah C.S."/>
            <person name="Furlan L.R."/>
            <person name="Quaggio R.B."/>
            <person name="Monteiro-Vitorello C.B."/>
            <person name="Van Sluys M.A."/>
            <person name="Almeida N.F. Jr."/>
            <person name="Alves L.M.C."/>
            <person name="do Amaral A.M."/>
            <person name="Bertolini M.C."/>
            <person name="Camargo L.E.A."/>
            <person name="Camarotte G."/>
            <person name="Cannavan F."/>
            <person name="Cardozo J."/>
            <person name="Chambergo F."/>
            <person name="Ciapina L.P."/>
            <person name="Cicarelli R.M.B."/>
            <person name="Coutinho L.L."/>
            <person name="Cursino-Santos J.R."/>
            <person name="El-Dorry H."/>
            <person name="Faria J.B."/>
            <person name="Ferreira A.J.S."/>
            <person name="Ferreira R.C.C."/>
            <person name="Ferro M.I.T."/>
            <person name="Formighieri E.F."/>
            <person name="Franco M.C."/>
            <person name="Greggio C.C."/>
            <person name="Gruber A."/>
            <person name="Katsuyama A.M."/>
            <person name="Kishi L.T."/>
            <person name="Leite R.P."/>
            <person name="Lemos E.G.M."/>
            <person name="Lemos M.V.F."/>
            <person name="Locali E.C."/>
            <person name="Machado M.A."/>
            <person name="Madeira A.M.B.N."/>
            <person name="Martinez-Rossi N.M."/>
            <person name="Martins E.C."/>
            <person name="Meidanis J."/>
            <person name="Menck C.F.M."/>
            <person name="Miyaki C.Y."/>
            <person name="Moon D.H."/>
            <person name="Moreira L.M."/>
            <person name="Novo M.T.M."/>
            <person name="Okura V.K."/>
            <person name="Oliveira M.C."/>
            <person name="Oliveira V.R."/>
            <person name="Pereira H.A."/>
            <person name="Rossi A."/>
            <person name="Sena J.A.D."/>
            <person name="Silva C."/>
            <person name="de Souza R.F."/>
            <person name="Spinola L.A.F."/>
            <person name="Takita M.A."/>
            <person name="Tamura R.E."/>
            <person name="Teixeira E.C."/>
            <person name="Tezza R.I.D."/>
            <person name="Trindade dos Santos M."/>
            <person name="Truffi D."/>
            <person name="Tsai S.M."/>
            <person name="White F.F."/>
            <person name="Setubal J.C."/>
            <person name="Kitajima J.P."/>
        </authorList>
    </citation>
    <scope>NUCLEOTIDE SEQUENCE [LARGE SCALE GENOMIC DNA]</scope>
    <source>
        <strain>ATCC 33913 / DSM 3586 / NCPPB 528 / LMG 568 / P 25</strain>
    </source>
</reference>
<gene>
    <name evidence="1" type="primary">rlmB</name>
    <name type="ordered locus">XCC1519</name>
</gene>
<evidence type="ECO:0000255" key="1">
    <source>
        <dbReference type="HAMAP-Rule" id="MF_01887"/>
    </source>
</evidence>
<proteinExistence type="inferred from homology"/>
<name>RLMB_XANCP</name>
<dbReference type="EC" id="2.1.1.185" evidence="1"/>
<dbReference type="EMBL" id="AE008922">
    <property type="protein sequence ID" value="AAM40814.1"/>
    <property type="molecule type" value="Genomic_DNA"/>
</dbReference>
<dbReference type="RefSeq" id="NP_636890.1">
    <property type="nucleotide sequence ID" value="NC_003902.1"/>
</dbReference>
<dbReference type="RefSeq" id="WP_011036704.1">
    <property type="nucleotide sequence ID" value="NC_003902.1"/>
</dbReference>
<dbReference type="SMR" id="Q8PAG5"/>
<dbReference type="STRING" id="190485.XCC1519"/>
<dbReference type="EnsemblBacteria" id="AAM40814">
    <property type="protein sequence ID" value="AAM40814"/>
    <property type="gene ID" value="XCC1519"/>
</dbReference>
<dbReference type="GeneID" id="58013890"/>
<dbReference type="KEGG" id="xcc:XCC1519"/>
<dbReference type="PATRIC" id="fig|190485.4.peg.1630"/>
<dbReference type="eggNOG" id="COG0566">
    <property type="taxonomic scope" value="Bacteria"/>
</dbReference>
<dbReference type="HOGENOM" id="CLU_021322_0_1_6"/>
<dbReference type="OrthoDB" id="9785673at2"/>
<dbReference type="Proteomes" id="UP000001010">
    <property type="component" value="Chromosome"/>
</dbReference>
<dbReference type="GO" id="GO:0005829">
    <property type="term" value="C:cytosol"/>
    <property type="evidence" value="ECO:0000318"/>
    <property type="project" value="GO_Central"/>
</dbReference>
<dbReference type="GO" id="GO:0003723">
    <property type="term" value="F:RNA binding"/>
    <property type="evidence" value="ECO:0007669"/>
    <property type="project" value="InterPro"/>
</dbReference>
<dbReference type="GO" id="GO:0070039">
    <property type="term" value="F:rRNA (guanosine-2'-O-)-methyltransferase activity"/>
    <property type="evidence" value="ECO:0000318"/>
    <property type="project" value="GO_Central"/>
</dbReference>
<dbReference type="CDD" id="cd18103">
    <property type="entry name" value="SpoU-like_RlmB"/>
    <property type="match status" value="1"/>
</dbReference>
<dbReference type="FunFam" id="3.40.1280.10:FF:000021">
    <property type="entry name" value="23S rRNA (guanosine-2'-O-)-methyltransferase RlmB"/>
    <property type="match status" value="1"/>
</dbReference>
<dbReference type="FunFam" id="3.30.1330.30:FF:000029">
    <property type="entry name" value="tRNA/rRNA methyltransferase"/>
    <property type="match status" value="1"/>
</dbReference>
<dbReference type="Gene3D" id="3.30.1330.30">
    <property type="match status" value="1"/>
</dbReference>
<dbReference type="Gene3D" id="3.40.1280.10">
    <property type="match status" value="1"/>
</dbReference>
<dbReference type="HAMAP" id="MF_01887">
    <property type="entry name" value="23SrRNA_methyltr_B"/>
    <property type="match status" value="1"/>
</dbReference>
<dbReference type="InterPro" id="IPR024915">
    <property type="entry name" value="23S_rRNA_MeTrfase_RlmB"/>
</dbReference>
<dbReference type="InterPro" id="IPR029028">
    <property type="entry name" value="Alpha/beta_knot_MTases"/>
</dbReference>
<dbReference type="InterPro" id="IPR029064">
    <property type="entry name" value="Ribosomal_eL30-like_sf"/>
</dbReference>
<dbReference type="InterPro" id="IPR004441">
    <property type="entry name" value="rRNA_MeTrfase_TrmH"/>
</dbReference>
<dbReference type="InterPro" id="IPR001537">
    <property type="entry name" value="SpoU_MeTrfase"/>
</dbReference>
<dbReference type="InterPro" id="IPR013123">
    <property type="entry name" value="SpoU_subst-bd"/>
</dbReference>
<dbReference type="InterPro" id="IPR029026">
    <property type="entry name" value="tRNA_m1G_MTases_N"/>
</dbReference>
<dbReference type="NCBIfam" id="TIGR00186">
    <property type="entry name" value="rRNA_methyl_3"/>
    <property type="match status" value="1"/>
</dbReference>
<dbReference type="PANTHER" id="PTHR46429">
    <property type="entry name" value="23S RRNA (GUANOSINE-2'-O-)-METHYLTRANSFERASE RLMB"/>
    <property type="match status" value="1"/>
</dbReference>
<dbReference type="PANTHER" id="PTHR46429:SF1">
    <property type="entry name" value="23S RRNA (GUANOSINE-2'-O-)-METHYLTRANSFERASE RLMB"/>
    <property type="match status" value="1"/>
</dbReference>
<dbReference type="Pfam" id="PF00588">
    <property type="entry name" value="SpoU_methylase"/>
    <property type="match status" value="1"/>
</dbReference>
<dbReference type="Pfam" id="PF08032">
    <property type="entry name" value="SpoU_sub_bind"/>
    <property type="match status" value="1"/>
</dbReference>
<dbReference type="SMART" id="SM00967">
    <property type="entry name" value="SpoU_sub_bind"/>
    <property type="match status" value="1"/>
</dbReference>
<dbReference type="SUPFAM" id="SSF75217">
    <property type="entry name" value="alpha/beta knot"/>
    <property type="match status" value="1"/>
</dbReference>
<dbReference type="SUPFAM" id="SSF55315">
    <property type="entry name" value="L30e-like"/>
    <property type="match status" value="1"/>
</dbReference>
<organism>
    <name type="scientific">Xanthomonas campestris pv. campestris (strain ATCC 33913 / DSM 3586 / NCPPB 528 / LMG 568 / P 25)</name>
    <dbReference type="NCBI Taxonomy" id="190485"/>
    <lineage>
        <taxon>Bacteria</taxon>
        <taxon>Pseudomonadati</taxon>
        <taxon>Pseudomonadota</taxon>
        <taxon>Gammaproteobacteria</taxon>
        <taxon>Lysobacterales</taxon>
        <taxon>Lysobacteraceae</taxon>
        <taxon>Xanthomonas</taxon>
    </lineage>
</organism>
<keyword id="KW-0963">Cytoplasm</keyword>
<keyword id="KW-0489">Methyltransferase</keyword>
<keyword id="KW-1185">Reference proteome</keyword>
<keyword id="KW-0698">rRNA processing</keyword>
<keyword id="KW-0949">S-adenosyl-L-methionine</keyword>
<keyword id="KW-0808">Transferase</keyword>
<sequence length="249" mass="26328">MSKQNQWIVGVNAVASSVENDADNVREVLIEAGSKNPRLTEIEEQARRKGIDVRRVNTQALDGVGGQVRHQGVAARYAAARLWAENELEGLVEAAQGRALVLILDGVQDPHNLGACLRSAAAAGVTAVVIPKDKSATVNATVRKTSAGAADRIPVVAVTNLARCLRDLQKQGVWLYGLAGEAEASLYSVDLRGNVGLVLGGEGDGLRRLTREHCDGLVKIPMPGDIESLNVSVATGVTLFEAVRQRLGA</sequence>
<feature type="chain" id="PRO_0000159810" description="23S rRNA (guanosine-2'-O-)-methyltransferase RlmB">
    <location>
        <begin position="1"/>
        <end position="249"/>
    </location>
</feature>
<feature type="binding site" evidence="1">
    <location>
        <position position="200"/>
    </location>
    <ligand>
        <name>S-adenosyl-L-methionine</name>
        <dbReference type="ChEBI" id="CHEBI:59789"/>
    </ligand>
</feature>
<feature type="binding site" evidence="1">
    <location>
        <position position="220"/>
    </location>
    <ligand>
        <name>S-adenosyl-L-methionine</name>
        <dbReference type="ChEBI" id="CHEBI:59789"/>
    </ligand>
</feature>
<feature type="binding site" evidence="1">
    <location>
        <position position="229"/>
    </location>
    <ligand>
        <name>S-adenosyl-L-methionine</name>
        <dbReference type="ChEBI" id="CHEBI:59789"/>
    </ligand>
</feature>
<protein>
    <recommendedName>
        <fullName evidence="1">23S rRNA (guanosine-2'-O-)-methyltransferase RlmB</fullName>
        <ecNumber evidence="1">2.1.1.185</ecNumber>
    </recommendedName>
    <alternativeName>
        <fullName evidence="1">23S rRNA (guanosine2251 2'-O)-methyltransferase</fullName>
    </alternativeName>
    <alternativeName>
        <fullName evidence="1">23S rRNA Gm2251 2'-O-methyltransferase</fullName>
    </alternativeName>
</protein>